<organism>
    <name type="scientific">Saimiriine herpesvirus 2 (strain 11)</name>
    <name type="common">SaHV-2</name>
    <name type="synonym">Herpesvirus saimiri</name>
    <dbReference type="NCBI Taxonomy" id="10383"/>
    <lineage>
        <taxon>Viruses</taxon>
        <taxon>Duplodnaviria</taxon>
        <taxon>Heunggongvirae</taxon>
        <taxon>Peploviricota</taxon>
        <taxon>Herviviricetes</taxon>
        <taxon>Herpesvirales</taxon>
        <taxon>Orthoherpesviridae</taxon>
        <taxon>Gammaherpesvirinae</taxon>
        <taxon>Rhadinovirus</taxon>
        <taxon>Rhadinovirus saimiriinegamma2</taxon>
        <taxon>Saimiriine herpesvirus 2</taxon>
    </lineage>
</organism>
<dbReference type="EMBL" id="X64346">
    <property type="protein sequence ID" value="CAA45640.1"/>
    <property type="molecule type" value="Genomic_DNA"/>
</dbReference>
<dbReference type="RefSeq" id="NP_040220.1">
    <property type="nucleotide sequence ID" value="NC_001350.1"/>
</dbReference>
<dbReference type="KEGG" id="vg:1682484"/>
<dbReference type="Proteomes" id="UP000000587">
    <property type="component" value="Segment"/>
</dbReference>
<dbReference type="InterPro" id="IPR004290">
    <property type="entry name" value="Herpes_UL79"/>
</dbReference>
<dbReference type="Pfam" id="PF03049">
    <property type="entry name" value="Herpes_UL79"/>
    <property type="match status" value="1"/>
</dbReference>
<accession>Q01003</accession>
<evidence type="ECO:0000305" key="1"/>
<organismHost>
    <name type="scientific">Saimiri sciureus</name>
    <name type="common">Common squirrel monkey</name>
    <dbReference type="NCBI Taxonomy" id="9521"/>
</organismHost>
<comment type="similarity">
    <text evidence="1">Belongs to the herpesviridae UL79 family.</text>
</comment>
<feature type="chain" id="PRO_0000116225" description="Gene 18 protein">
    <location>
        <begin position="1"/>
        <end position="256"/>
    </location>
</feature>
<sequence>MDILGRFVRESKKMSPGLKTIMEKVLRGQSLNSFHSEELRFLHLVICKMYDFCLNVYILKESIINTGTRDNEVLSRKVPVEIWKIMYDACKSIGVENTMLIDDSSRGQLWLHLNSNIDLLQGMSQFIFSKLGIKHFVKISPQNITDGNYLFNLGSVLPYRLILILQFCLIFWGKEQEEAWVRFFTGKIFMLYLLITGHLLIQKTFILQAASTGYCGPLEIIGDDLRSYLGIHTYMTNDLQHIPSLDLLFIFNNNFY</sequence>
<keyword id="KW-1185">Reference proteome</keyword>
<gene>
    <name type="primary">18</name>
</gene>
<protein>
    <recommendedName>
        <fullName>Gene 18 protein</fullName>
    </recommendedName>
</protein>
<proteinExistence type="inferred from homology"/>
<name>UL79_SHV21</name>
<reference key="1">
    <citation type="journal article" date="1992" name="J. Virol.">
        <title>Primary structure of the herpesvirus saimiri genome.</title>
        <authorList>
            <person name="Albrecht J.-C."/>
            <person name="Nicholas J."/>
            <person name="Biller D."/>
            <person name="Cameron K.R."/>
            <person name="Biesinger B."/>
            <person name="Newman C."/>
            <person name="Wittmann S."/>
            <person name="Craxton M.A."/>
            <person name="Coleman H."/>
            <person name="Fleckenstein B."/>
            <person name="Honess R.W."/>
        </authorList>
    </citation>
    <scope>NUCLEOTIDE SEQUENCE [LARGE SCALE GENOMIC DNA]</scope>
</reference>